<organism>
    <name type="scientific">Arabidopsis thaliana</name>
    <name type="common">Mouse-ear cress</name>
    <dbReference type="NCBI Taxonomy" id="3702"/>
    <lineage>
        <taxon>Eukaryota</taxon>
        <taxon>Viridiplantae</taxon>
        <taxon>Streptophyta</taxon>
        <taxon>Embryophyta</taxon>
        <taxon>Tracheophyta</taxon>
        <taxon>Spermatophyta</taxon>
        <taxon>Magnoliopsida</taxon>
        <taxon>eudicotyledons</taxon>
        <taxon>Gunneridae</taxon>
        <taxon>Pentapetalae</taxon>
        <taxon>rosids</taxon>
        <taxon>malvids</taxon>
        <taxon>Brassicales</taxon>
        <taxon>Brassicaceae</taxon>
        <taxon>Camelineae</taxon>
        <taxon>Arabidopsis</taxon>
    </lineage>
</organism>
<name>RAE1_ARATH</name>
<feature type="initiator methionine" description="Removed" evidence="10">
    <location>
        <position position="1"/>
    </location>
</feature>
<feature type="chain" id="PRO_0000051180" description="Protein RAE1">
    <location>
        <begin position="2"/>
        <end position="349"/>
    </location>
</feature>
<feature type="repeat" description="WD 1" evidence="2">
    <location>
        <begin position="23"/>
        <end position="62"/>
    </location>
</feature>
<feature type="repeat" description="WD 2" evidence="2">
    <location>
        <begin position="70"/>
        <end position="109"/>
    </location>
</feature>
<feature type="repeat" description="WD 3" evidence="2">
    <location>
        <begin position="112"/>
        <end position="151"/>
    </location>
</feature>
<feature type="repeat" description="WD 4" evidence="2">
    <location>
        <begin position="153"/>
        <end position="190"/>
    </location>
</feature>
<feature type="repeat" description="WD 5" evidence="2">
    <location>
        <begin position="244"/>
        <end position="283"/>
    </location>
</feature>
<feature type="region of interest" description="Disordered" evidence="3">
    <location>
        <begin position="1"/>
        <end position="21"/>
    </location>
</feature>
<feature type="short sequence motif" description="DWD box">
    <location>
        <begin position="128"/>
        <end position="144"/>
    </location>
</feature>
<feature type="compositionally biased region" description="Polar residues" evidence="3">
    <location>
        <begin position="9"/>
        <end position="21"/>
    </location>
</feature>
<feature type="modified residue" description="N-acetylalanine" evidence="10">
    <location>
        <position position="2"/>
    </location>
</feature>
<gene>
    <name evidence="5" type="primary">RAE1</name>
    <name evidence="8" type="ordered locus">At1g80670</name>
    <name evidence="9" type="ORF">F23A5.2</name>
</gene>
<reference key="1">
    <citation type="submission" date="1996-05" db="EMBL/GenBank/DDBJ databases">
        <title>A 37.5 Kb sequence from Arabidopsis thaliana chromosome I.</title>
        <authorList>
            <person name="Goodman H.M."/>
            <person name="Gallant P."/>
            <person name="Keifer-Higgins S."/>
            <person name="Rubenfield M."/>
            <person name="Church G.M."/>
        </authorList>
    </citation>
    <scope>NUCLEOTIDE SEQUENCE [GENOMIC DNA]</scope>
    <source>
        <strain>cv. Columbia</strain>
    </source>
</reference>
<reference key="2">
    <citation type="journal article" date="2000" name="Nature">
        <title>Sequence and analysis of chromosome 1 of the plant Arabidopsis thaliana.</title>
        <authorList>
            <person name="Theologis A."/>
            <person name="Ecker J.R."/>
            <person name="Palm C.J."/>
            <person name="Federspiel N.A."/>
            <person name="Kaul S."/>
            <person name="White O."/>
            <person name="Alonso J."/>
            <person name="Altafi H."/>
            <person name="Araujo R."/>
            <person name="Bowman C.L."/>
            <person name="Brooks S.Y."/>
            <person name="Buehler E."/>
            <person name="Chan A."/>
            <person name="Chao Q."/>
            <person name="Chen H."/>
            <person name="Cheuk R.F."/>
            <person name="Chin C.W."/>
            <person name="Chung M.K."/>
            <person name="Conn L."/>
            <person name="Conway A.B."/>
            <person name="Conway A.R."/>
            <person name="Creasy T.H."/>
            <person name="Dewar K."/>
            <person name="Dunn P."/>
            <person name="Etgu P."/>
            <person name="Feldblyum T.V."/>
            <person name="Feng J.-D."/>
            <person name="Fong B."/>
            <person name="Fujii C.Y."/>
            <person name="Gill J.E."/>
            <person name="Goldsmith A.D."/>
            <person name="Haas B."/>
            <person name="Hansen N.F."/>
            <person name="Hughes B."/>
            <person name="Huizar L."/>
            <person name="Hunter J.L."/>
            <person name="Jenkins J."/>
            <person name="Johnson-Hopson C."/>
            <person name="Khan S."/>
            <person name="Khaykin E."/>
            <person name="Kim C.J."/>
            <person name="Koo H.L."/>
            <person name="Kremenetskaia I."/>
            <person name="Kurtz D.B."/>
            <person name="Kwan A."/>
            <person name="Lam B."/>
            <person name="Langin-Hooper S."/>
            <person name="Lee A."/>
            <person name="Lee J.M."/>
            <person name="Lenz C.A."/>
            <person name="Li J.H."/>
            <person name="Li Y.-P."/>
            <person name="Lin X."/>
            <person name="Liu S.X."/>
            <person name="Liu Z.A."/>
            <person name="Luros J.S."/>
            <person name="Maiti R."/>
            <person name="Marziali A."/>
            <person name="Militscher J."/>
            <person name="Miranda M."/>
            <person name="Nguyen M."/>
            <person name="Nierman W.C."/>
            <person name="Osborne B.I."/>
            <person name="Pai G."/>
            <person name="Peterson J."/>
            <person name="Pham P.K."/>
            <person name="Rizzo M."/>
            <person name="Rooney T."/>
            <person name="Rowley D."/>
            <person name="Sakano H."/>
            <person name="Salzberg S.L."/>
            <person name="Schwartz J.R."/>
            <person name="Shinn P."/>
            <person name="Southwick A.M."/>
            <person name="Sun H."/>
            <person name="Tallon L.J."/>
            <person name="Tambunga G."/>
            <person name="Toriumi M.J."/>
            <person name="Town C.D."/>
            <person name="Utterback T."/>
            <person name="Van Aken S."/>
            <person name="Vaysberg M."/>
            <person name="Vysotskaia V.S."/>
            <person name="Walker M."/>
            <person name="Wu D."/>
            <person name="Yu G."/>
            <person name="Fraser C.M."/>
            <person name="Venter J.C."/>
            <person name="Davis R.W."/>
        </authorList>
    </citation>
    <scope>NUCLEOTIDE SEQUENCE [LARGE SCALE GENOMIC DNA]</scope>
    <source>
        <strain>cv. Columbia</strain>
    </source>
</reference>
<reference key="3">
    <citation type="journal article" date="2017" name="Plant J.">
        <title>Araport11: a complete reannotation of the Arabidopsis thaliana reference genome.</title>
        <authorList>
            <person name="Cheng C.Y."/>
            <person name="Krishnakumar V."/>
            <person name="Chan A.P."/>
            <person name="Thibaud-Nissen F."/>
            <person name="Schobel S."/>
            <person name="Town C.D."/>
        </authorList>
    </citation>
    <scope>GENOME REANNOTATION</scope>
    <source>
        <strain>cv. Columbia</strain>
    </source>
</reference>
<reference key="4">
    <citation type="submission" date="2006-04" db="EMBL/GenBank/DDBJ databases">
        <title>Arabidopsis ORF clones.</title>
        <authorList>
            <person name="Shinn P."/>
            <person name="Chen H."/>
            <person name="Kim C.J."/>
            <person name="Quinitio C."/>
            <person name="Ecker J.R."/>
        </authorList>
    </citation>
    <scope>NUCLEOTIDE SEQUENCE [LARGE SCALE MRNA]</scope>
    <source>
        <strain>cv. Columbia</strain>
    </source>
</reference>
<reference key="5">
    <citation type="submission" date="2002-03" db="EMBL/GenBank/DDBJ databases">
        <title>Full-length cDNA from Arabidopsis thaliana.</title>
        <authorList>
            <person name="Brover V.V."/>
            <person name="Troukhan M.E."/>
            <person name="Alexandrov N.A."/>
            <person name="Lu Y.-P."/>
            <person name="Flavell R.B."/>
            <person name="Feldmann K.A."/>
        </authorList>
    </citation>
    <scope>NUCLEOTIDE SEQUENCE [LARGE SCALE MRNA]</scope>
</reference>
<reference key="6">
    <citation type="journal article" date="2008" name="Plant Cell">
        <title>Characterization of Arabidopsis and rice DWD proteins and their roles as substrate receptors for CUL4-RING E3 ubiquitin ligases.</title>
        <authorList>
            <person name="Lee J.H."/>
            <person name="Terzaghi W."/>
            <person name="Gusmaroli G."/>
            <person name="Charron J.B."/>
            <person name="Yoon H.J."/>
            <person name="Chen H."/>
            <person name="He Y.J."/>
            <person name="Xiong Y."/>
            <person name="Deng X.W."/>
        </authorList>
    </citation>
    <scope>DWD MOTIF</scope>
    <scope>INTERACTION WITH DDB1A</scope>
</reference>
<reference key="7">
    <citation type="journal article" date="2010" name="Plant Cell">
        <title>Identification and characterization of nuclear pore complex components in Arabidopsis thaliana.</title>
        <authorList>
            <person name="Tamura K."/>
            <person name="Fukao Y."/>
            <person name="Iwamoto M."/>
            <person name="Haraguchi T."/>
            <person name="Hara-Nishimura I."/>
        </authorList>
    </citation>
    <scope>IDENTIFICATION IN THE NUCLEAR PORE COMPLEX BY MASS SPECTROMETRY</scope>
    <scope>SUBCELLULAR LOCATION</scope>
</reference>
<reference key="8">
    <citation type="journal article" date="2012" name="Mol. Cell. Proteomics">
        <title>Comparative large-scale characterisation of plant vs. mammal proteins reveals similar and idiosyncratic N-alpha acetylation features.</title>
        <authorList>
            <person name="Bienvenut W.V."/>
            <person name="Sumpton D."/>
            <person name="Martinez A."/>
            <person name="Lilla S."/>
            <person name="Espagne C."/>
            <person name="Meinnel T."/>
            <person name="Giglione C."/>
        </authorList>
    </citation>
    <scope>ACETYLATION [LARGE SCALE ANALYSIS] AT ALA-2</scope>
    <scope>CLEAVAGE OF INITIATOR METHIONINE [LARGE SCALE ANALYSIS]</scope>
    <scope>IDENTIFICATION BY MASS SPECTROMETRY [LARGE SCALE ANALYSIS]</scope>
</reference>
<dbReference type="EMBL" id="U53501">
    <property type="protein sequence ID" value="AAA98915.1"/>
    <property type="status" value="ALT_SEQ"/>
    <property type="molecule type" value="Genomic_DNA"/>
</dbReference>
<dbReference type="EMBL" id="AC011713">
    <property type="protein sequence ID" value="AAF14654.1"/>
    <property type="status" value="ALT_SEQ"/>
    <property type="molecule type" value="Genomic_DNA"/>
</dbReference>
<dbReference type="EMBL" id="AC011713">
    <property type="protein sequence ID" value="AAF14655.1"/>
    <property type="molecule type" value="Genomic_DNA"/>
</dbReference>
<dbReference type="EMBL" id="CP002684">
    <property type="protein sequence ID" value="AEE36435.1"/>
    <property type="molecule type" value="Genomic_DNA"/>
</dbReference>
<dbReference type="EMBL" id="BT025241">
    <property type="protein sequence ID" value="ABF18994.1"/>
    <property type="molecule type" value="mRNA"/>
</dbReference>
<dbReference type="EMBL" id="AY087683">
    <property type="protein sequence ID" value="AAM65220.1"/>
    <property type="molecule type" value="mRNA"/>
</dbReference>
<dbReference type="PIR" id="A96839">
    <property type="entry name" value="A96839"/>
</dbReference>
<dbReference type="PIR" id="S71241">
    <property type="entry name" value="S71241"/>
</dbReference>
<dbReference type="RefSeq" id="NP_178182.1">
    <property type="nucleotide sequence ID" value="NM_106715.5"/>
</dbReference>
<dbReference type="SMR" id="Q38942"/>
<dbReference type="BioGRID" id="29624">
    <property type="interactions" value="192"/>
</dbReference>
<dbReference type="FunCoup" id="Q38942">
    <property type="interactions" value="4759"/>
</dbReference>
<dbReference type="IntAct" id="Q38942">
    <property type="interactions" value="1"/>
</dbReference>
<dbReference type="STRING" id="3702.Q38942"/>
<dbReference type="GlyGen" id="Q38942">
    <property type="glycosylation" value="1 site"/>
</dbReference>
<dbReference type="iPTMnet" id="Q38942"/>
<dbReference type="PaxDb" id="3702-AT1G80670.1"/>
<dbReference type="ProteomicsDB" id="236561"/>
<dbReference type="EnsemblPlants" id="AT1G80670.1">
    <property type="protein sequence ID" value="AT1G80670.1"/>
    <property type="gene ID" value="AT1G80670"/>
</dbReference>
<dbReference type="GeneID" id="844406"/>
<dbReference type="Gramene" id="AT1G80670.1">
    <property type="protein sequence ID" value="AT1G80670.1"/>
    <property type="gene ID" value="AT1G80670"/>
</dbReference>
<dbReference type="KEGG" id="ath:AT1G80670"/>
<dbReference type="Araport" id="AT1G80670"/>
<dbReference type="TAIR" id="AT1G80670">
    <property type="gene designation" value="RAE1"/>
</dbReference>
<dbReference type="eggNOG" id="KOG0647">
    <property type="taxonomic scope" value="Eukaryota"/>
</dbReference>
<dbReference type="HOGENOM" id="CLU_038526_1_0_1"/>
<dbReference type="InParanoid" id="Q38942"/>
<dbReference type="OMA" id="EAMDQSI"/>
<dbReference type="OrthoDB" id="256303at2759"/>
<dbReference type="PhylomeDB" id="Q38942"/>
<dbReference type="CD-CODE" id="4299E36E">
    <property type="entry name" value="Nucleolus"/>
</dbReference>
<dbReference type="PRO" id="PR:Q38942"/>
<dbReference type="Proteomes" id="UP000006548">
    <property type="component" value="Chromosome 1"/>
</dbReference>
<dbReference type="ExpressionAtlas" id="Q38942">
    <property type="expression patterns" value="baseline and differential"/>
</dbReference>
<dbReference type="GO" id="GO:0080008">
    <property type="term" value="C:Cul4-RING E3 ubiquitin ligase complex"/>
    <property type="evidence" value="ECO:0000353"/>
    <property type="project" value="TAIR"/>
</dbReference>
<dbReference type="GO" id="GO:0005635">
    <property type="term" value="C:nuclear envelope"/>
    <property type="evidence" value="ECO:0000314"/>
    <property type="project" value="TAIR"/>
</dbReference>
<dbReference type="GO" id="GO:0005643">
    <property type="term" value="C:nuclear pore"/>
    <property type="evidence" value="ECO:0007669"/>
    <property type="project" value="UniProtKB-SubCell"/>
</dbReference>
<dbReference type="GO" id="GO:0051028">
    <property type="term" value="P:mRNA transport"/>
    <property type="evidence" value="ECO:0007669"/>
    <property type="project" value="UniProtKB-KW"/>
</dbReference>
<dbReference type="GO" id="GO:0015031">
    <property type="term" value="P:protein transport"/>
    <property type="evidence" value="ECO:0007669"/>
    <property type="project" value="UniProtKB-KW"/>
</dbReference>
<dbReference type="FunFam" id="2.130.10.10:FF:000146">
    <property type="entry name" value="protein RAE1 isoform X1"/>
    <property type="match status" value="1"/>
</dbReference>
<dbReference type="Gene3D" id="2.130.10.10">
    <property type="entry name" value="YVTN repeat-like/Quinoprotein amine dehydrogenase"/>
    <property type="match status" value="1"/>
</dbReference>
<dbReference type="InterPro" id="IPR020472">
    <property type="entry name" value="G-protein_beta_WD-40_rep"/>
</dbReference>
<dbReference type="InterPro" id="IPR015943">
    <property type="entry name" value="WD40/YVTN_repeat-like_dom_sf"/>
</dbReference>
<dbReference type="InterPro" id="IPR036322">
    <property type="entry name" value="WD40_repeat_dom_sf"/>
</dbReference>
<dbReference type="InterPro" id="IPR001680">
    <property type="entry name" value="WD40_rpt"/>
</dbReference>
<dbReference type="PANTHER" id="PTHR10971">
    <property type="entry name" value="MRNA EXPORT FACTOR AND BUB3"/>
    <property type="match status" value="1"/>
</dbReference>
<dbReference type="Pfam" id="PF00400">
    <property type="entry name" value="WD40"/>
    <property type="match status" value="4"/>
</dbReference>
<dbReference type="PRINTS" id="PR00320">
    <property type="entry name" value="GPROTEINBRPT"/>
</dbReference>
<dbReference type="SMART" id="SM00320">
    <property type="entry name" value="WD40"/>
    <property type="match status" value="5"/>
</dbReference>
<dbReference type="SUPFAM" id="SSF50978">
    <property type="entry name" value="WD40 repeat-like"/>
    <property type="match status" value="1"/>
</dbReference>
<dbReference type="PROSITE" id="PS50082">
    <property type="entry name" value="WD_REPEATS_2"/>
    <property type="match status" value="4"/>
</dbReference>
<dbReference type="PROSITE" id="PS50294">
    <property type="entry name" value="WD_REPEATS_REGION"/>
    <property type="match status" value="1"/>
</dbReference>
<sequence>MATFGAPATANSNPNKSYEVTPSPADSISSLSFSPRADILVATSWDNQVRCWEISRSGASLASAPKASISHDQPVLCSAWKDDGTTVFSGGCDKQAKMWPLLSGGQPVTVAMHEGPIAAMAWIPGMNLLATGSWDKTLKYWDTRQQNPVHTQQLPDKCYTLSVKHPLMVVGTADRNLIVFNLQNPQTEFKRIQSPLKYQTRCVTAFPDQQGFLVGSIEGRVGVHHLDDSQQSKNFTFKCHRDGNDIYSVNSLNFHPVHGTFATAGSDGAFNFWDKDSKQRLKAMSRCNQPIPCSSFNHDGSIYAYAACYDWSKGAENHNPATAKSSIFLHLPQESEVKAKPRVGATGRK</sequence>
<keyword id="KW-0007">Acetylation</keyword>
<keyword id="KW-0509">mRNA transport</keyword>
<keyword id="KW-0906">Nuclear pore complex</keyword>
<keyword id="KW-0539">Nucleus</keyword>
<keyword id="KW-0653">Protein transport</keyword>
<keyword id="KW-1185">Reference proteome</keyword>
<keyword id="KW-0677">Repeat</keyword>
<keyword id="KW-0811">Translocation</keyword>
<keyword id="KW-0813">Transport</keyword>
<keyword id="KW-0853">WD repeat</keyword>
<accession>Q38942</accession>
<accession>Q1LYY5</accession>
<accession>Q9SAJ0</accession>
<evidence type="ECO:0000250" key="1">
    <source>
        <dbReference type="UniProtKB" id="Q42384"/>
    </source>
</evidence>
<evidence type="ECO:0000255" key="2"/>
<evidence type="ECO:0000256" key="3">
    <source>
        <dbReference type="SAM" id="MobiDB-lite"/>
    </source>
</evidence>
<evidence type="ECO:0000269" key="4">
    <source>
    </source>
</evidence>
<evidence type="ECO:0000303" key="5">
    <source>
    </source>
</evidence>
<evidence type="ECO:0000305" key="6"/>
<evidence type="ECO:0000305" key="7">
    <source>
    </source>
</evidence>
<evidence type="ECO:0000312" key="8">
    <source>
        <dbReference type="Araport" id="AT1G80670"/>
    </source>
</evidence>
<evidence type="ECO:0000312" key="9">
    <source>
        <dbReference type="EMBL" id="AAF14655.1"/>
    </source>
</evidence>
<evidence type="ECO:0007744" key="10">
    <source>
    </source>
</evidence>
<proteinExistence type="evidence at protein level"/>
<comment type="subunit">
    <text evidence="7">Part of the nuclear pore complex (NPC). The NPC has an eight-fold symmetrical structure comprising a central transport channel and two rings, the cytoplasmic and nuclear rings, to which eight filaments are attached. The cytoplasmic filaments have loose ends, while the nuclear filaments are joined in a distal ring, forming a nuclear basket. NPCs are highly dynamic in configuration and composition, and can be devided in 3 subcomplexes, the NUP62 subcomplex, the NUP107-160 subcomplex and the NUP93 subcomplex, containing approximately 30 different nucleoporin proteins. Interacts with DDB1A.</text>
</comment>
<comment type="subcellular location">
    <subcellularLocation>
        <location evidence="4">Nucleus envelope</location>
    </subcellularLocation>
    <subcellularLocation>
        <location evidence="4">Nucleus</location>
        <location evidence="4">Nuclear pore complex</location>
    </subcellularLocation>
</comment>
<comment type="domain">
    <text evidence="1">The DWD box is required for interaction with DDB1A.</text>
</comment>
<comment type="similarity">
    <text evidence="6">Belongs to the WD repeat rae1 family.</text>
</comment>
<comment type="sequence caution" evidence="6">
    <conflict type="erroneous gene model prediction">
        <sequence resource="EMBL-CDS" id="AAA98915"/>
    </conflict>
</comment>
<comment type="sequence caution" evidence="6">
    <conflict type="erroneous gene model prediction">
        <sequence resource="EMBL-CDS" id="AAF14654"/>
    </conflict>
</comment>
<protein>
    <recommendedName>
        <fullName evidence="5">Protein RAE1</fullName>
    </recommendedName>
    <alternativeName>
        <fullName evidence="5">RNA export factor 1</fullName>
    </alternativeName>
</protein>